<evidence type="ECO:0000255" key="1">
    <source>
        <dbReference type="HAMAP-Rule" id="MF_01523"/>
    </source>
</evidence>
<dbReference type="EC" id="2.1.1.242" evidence="1"/>
<dbReference type="EMBL" id="CP000127">
    <property type="protein sequence ID" value="ABA57566.1"/>
    <property type="molecule type" value="Genomic_DNA"/>
</dbReference>
<dbReference type="RefSeq" id="WP_002809432.1">
    <property type="nucleotide sequence ID" value="NC_007484.1"/>
</dbReference>
<dbReference type="SMR" id="Q3JC80"/>
<dbReference type="FunCoup" id="Q3JC80">
    <property type="interactions" value="11"/>
</dbReference>
<dbReference type="STRING" id="323261.Noc_1058"/>
<dbReference type="KEGG" id="noc:Noc_1058"/>
<dbReference type="eggNOG" id="COG0742">
    <property type="taxonomic scope" value="Bacteria"/>
</dbReference>
<dbReference type="HOGENOM" id="CLU_076324_0_1_6"/>
<dbReference type="InParanoid" id="Q3JC80"/>
<dbReference type="Proteomes" id="UP000006838">
    <property type="component" value="Chromosome"/>
</dbReference>
<dbReference type="GO" id="GO:0005737">
    <property type="term" value="C:cytoplasm"/>
    <property type="evidence" value="ECO:0007669"/>
    <property type="project" value="UniProtKB-SubCell"/>
</dbReference>
<dbReference type="GO" id="GO:0008990">
    <property type="term" value="F:rRNA (guanine-N2-)-methyltransferase activity"/>
    <property type="evidence" value="ECO:0007669"/>
    <property type="project" value="UniProtKB-UniRule"/>
</dbReference>
<dbReference type="Gene3D" id="3.40.50.150">
    <property type="entry name" value="Vaccinia Virus protein VP39"/>
    <property type="match status" value="1"/>
</dbReference>
<dbReference type="HAMAP" id="MF_01523">
    <property type="entry name" value="16SrRNA_methyltr_J"/>
    <property type="match status" value="1"/>
</dbReference>
<dbReference type="InterPro" id="IPR007536">
    <property type="entry name" value="16SrRNA_methylTrfase_J"/>
</dbReference>
<dbReference type="InterPro" id="IPR029063">
    <property type="entry name" value="SAM-dependent_MTases_sf"/>
</dbReference>
<dbReference type="PANTHER" id="PTHR36112">
    <property type="entry name" value="RIBOSOMAL RNA SMALL SUBUNIT METHYLTRANSFERASE J"/>
    <property type="match status" value="1"/>
</dbReference>
<dbReference type="PANTHER" id="PTHR36112:SF1">
    <property type="entry name" value="RIBOSOMAL RNA SMALL SUBUNIT METHYLTRANSFERASE J"/>
    <property type="match status" value="1"/>
</dbReference>
<dbReference type="Pfam" id="PF04445">
    <property type="entry name" value="SAM_MT"/>
    <property type="match status" value="1"/>
</dbReference>
<dbReference type="SUPFAM" id="SSF53335">
    <property type="entry name" value="S-adenosyl-L-methionine-dependent methyltransferases"/>
    <property type="match status" value="1"/>
</dbReference>
<gene>
    <name evidence="1" type="primary">rsmJ</name>
    <name type="ordered locus">Noc_1058</name>
</gene>
<sequence>MQNAGIAFDSLEQLNAARQLACRLGLPLLTPPLNLGRPTITLVLSAQRLELHHPELGAPLFVDFVKGAMGYRRRQGEGRKQPLARAIGLKGNVCPDVLDATAGLGRDAFVLAMLGCPVRLIEQSPVIGALLEDGLARARKTPETAPIIAQMTLMQANAVDWMGTLNAQDFPDVVYLDPMYPERTKSALVKKEMRLLRILAGKDENAPLLLEVALECARQRVVVKRPRPGVFLAGVKPDFSIESKTTRFDIYLTH</sequence>
<accession>Q3JC80</accession>
<name>RSMJ_NITOC</name>
<feature type="chain" id="PRO_0000244274" description="Ribosomal RNA small subunit methyltransferase J">
    <location>
        <begin position="1"/>
        <end position="254"/>
    </location>
</feature>
<feature type="binding site" evidence="1">
    <location>
        <begin position="106"/>
        <end position="107"/>
    </location>
    <ligand>
        <name>S-adenosyl-L-methionine</name>
        <dbReference type="ChEBI" id="CHEBI:59789"/>
    </ligand>
</feature>
<feature type="binding site" evidence="1">
    <location>
        <position position="177"/>
    </location>
    <ligand>
        <name>S-adenosyl-L-methionine</name>
        <dbReference type="ChEBI" id="CHEBI:59789"/>
    </ligand>
</feature>
<keyword id="KW-0963">Cytoplasm</keyword>
<keyword id="KW-0489">Methyltransferase</keyword>
<keyword id="KW-1185">Reference proteome</keyword>
<keyword id="KW-0698">rRNA processing</keyword>
<keyword id="KW-0949">S-adenosyl-L-methionine</keyword>
<keyword id="KW-0808">Transferase</keyword>
<reference key="1">
    <citation type="journal article" date="2006" name="Appl. Environ. Microbiol.">
        <title>Complete genome sequence of the marine, chemolithoautotrophic, ammonia-oxidizing bacterium Nitrosococcus oceani ATCC 19707.</title>
        <authorList>
            <person name="Klotz M.G."/>
            <person name="Arp D.J."/>
            <person name="Chain P.S.G."/>
            <person name="El-Sheikh A.F."/>
            <person name="Hauser L.J."/>
            <person name="Hommes N.G."/>
            <person name="Larimer F.W."/>
            <person name="Malfatti S.A."/>
            <person name="Norton J.M."/>
            <person name="Poret-Peterson A.T."/>
            <person name="Vergez L.M."/>
            <person name="Ward B.B."/>
        </authorList>
    </citation>
    <scope>NUCLEOTIDE SEQUENCE [LARGE SCALE GENOMIC DNA]</scope>
    <source>
        <strain>ATCC 19707 / BCRC 17464 / JCM 30415 / NCIMB 11848 / C-107</strain>
    </source>
</reference>
<organism>
    <name type="scientific">Nitrosococcus oceani (strain ATCC 19707 / BCRC 17464 / JCM 30415 / NCIMB 11848 / C-107)</name>
    <dbReference type="NCBI Taxonomy" id="323261"/>
    <lineage>
        <taxon>Bacteria</taxon>
        <taxon>Pseudomonadati</taxon>
        <taxon>Pseudomonadota</taxon>
        <taxon>Gammaproteobacteria</taxon>
        <taxon>Chromatiales</taxon>
        <taxon>Chromatiaceae</taxon>
        <taxon>Nitrosococcus</taxon>
    </lineage>
</organism>
<comment type="function">
    <text evidence="1">Specifically methylates the guanosine in position 1516 of 16S rRNA.</text>
</comment>
<comment type="catalytic activity">
    <reaction evidence="1">
        <text>guanosine(1516) in 16S rRNA + S-adenosyl-L-methionine = N(2)-methylguanosine(1516) in 16S rRNA + S-adenosyl-L-homocysteine + H(+)</text>
        <dbReference type="Rhea" id="RHEA:43220"/>
        <dbReference type="Rhea" id="RHEA-COMP:10412"/>
        <dbReference type="Rhea" id="RHEA-COMP:10413"/>
        <dbReference type="ChEBI" id="CHEBI:15378"/>
        <dbReference type="ChEBI" id="CHEBI:57856"/>
        <dbReference type="ChEBI" id="CHEBI:59789"/>
        <dbReference type="ChEBI" id="CHEBI:74269"/>
        <dbReference type="ChEBI" id="CHEBI:74481"/>
        <dbReference type="EC" id="2.1.1.242"/>
    </reaction>
</comment>
<comment type="subcellular location">
    <subcellularLocation>
        <location evidence="1">Cytoplasm</location>
    </subcellularLocation>
</comment>
<comment type="similarity">
    <text evidence="1">Belongs to the methyltransferase superfamily. RsmJ family.</text>
</comment>
<proteinExistence type="inferred from homology"/>
<protein>
    <recommendedName>
        <fullName evidence="1">Ribosomal RNA small subunit methyltransferase J</fullName>
        <ecNumber evidence="1">2.1.1.242</ecNumber>
    </recommendedName>
    <alternativeName>
        <fullName evidence="1">16S rRNA m2G1516 methyltransferase</fullName>
    </alternativeName>
    <alternativeName>
        <fullName evidence="1">rRNA (guanine-N(2)-)-methyltransferase</fullName>
    </alternativeName>
</protein>